<protein>
    <recommendedName>
        <fullName evidence="1">Regulator of ribonuclease activity A</fullName>
    </recommendedName>
</protein>
<organism>
    <name type="scientific">Alteromonas mediterranea (strain DSM 17117 / CIP 110805 / LMG 28347 / Deep ecotype)</name>
    <dbReference type="NCBI Taxonomy" id="1774373"/>
    <lineage>
        <taxon>Bacteria</taxon>
        <taxon>Pseudomonadati</taxon>
        <taxon>Pseudomonadota</taxon>
        <taxon>Gammaproteobacteria</taxon>
        <taxon>Alteromonadales</taxon>
        <taxon>Alteromonadaceae</taxon>
        <taxon>Alteromonas/Salinimonas group</taxon>
        <taxon>Alteromonas</taxon>
    </lineage>
</organism>
<proteinExistence type="inferred from homology"/>
<keyword id="KW-0963">Cytoplasm</keyword>
<reference key="1">
    <citation type="journal article" date="2008" name="ISME J.">
        <title>Comparative genomics of two ecotypes of the marine planktonic copiotroph Alteromonas macleodii suggests alternative lifestyles associated with different kinds of particulate organic matter.</title>
        <authorList>
            <person name="Ivars-Martinez E."/>
            <person name="Martin-Cuadrado A.-B."/>
            <person name="D'Auria G."/>
            <person name="Mira A."/>
            <person name="Ferriera S."/>
            <person name="Johnson J."/>
            <person name="Friedman R."/>
            <person name="Rodriguez-Valera F."/>
        </authorList>
    </citation>
    <scope>NUCLEOTIDE SEQUENCE [LARGE SCALE GENOMIC DNA]</scope>
    <source>
        <strain>DSM 17117 / CIP 110805 / LMG 28347 / Deep ecotype</strain>
    </source>
</reference>
<sequence>MEYNTSELCDLFADSVDVVDPIFASFGGRYSFGGEITTVKCFEDRGLIDRVLAQPGAGKVLLIDGGGSSRRALFDASSAQVAIDNDWEGVVIYGSVREVDSLAELDIGVLAVAAIPVNAECESVGEVDLPVNFGGVTFLPEDHLYADSTGVILSPEPLDLD</sequence>
<name>RRAA_ALTMD</name>
<dbReference type="EMBL" id="CP001103">
    <property type="protein sequence ID" value="AEA96356.1"/>
    <property type="molecule type" value="Genomic_DNA"/>
</dbReference>
<dbReference type="RefSeq" id="WP_012516730.1">
    <property type="nucleotide sequence ID" value="NC_011138.3"/>
</dbReference>
<dbReference type="SMR" id="B4S2E4"/>
<dbReference type="KEGG" id="amc:MADE_1001035"/>
<dbReference type="PATRIC" id="fig|314275.5.peg.215"/>
<dbReference type="HOGENOM" id="CLU_072626_4_0_6"/>
<dbReference type="Proteomes" id="UP000001870">
    <property type="component" value="Chromosome"/>
</dbReference>
<dbReference type="GO" id="GO:0005737">
    <property type="term" value="C:cytoplasm"/>
    <property type="evidence" value="ECO:0007669"/>
    <property type="project" value="UniProtKB-SubCell"/>
</dbReference>
<dbReference type="GO" id="GO:0060698">
    <property type="term" value="F:endoribonuclease inhibitor activity"/>
    <property type="evidence" value="ECO:0007669"/>
    <property type="project" value="UniProtKB-UniRule"/>
</dbReference>
<dbReference type="GO" id="GO:0019899">
    <property type="term" value="F:enzyme binding"/>
    <property type="evidence" value="ECO:0007669"/>
    <property type="project" value="UniProtKB-UniRule"/>
</dbReference>
<dbReference type="GO" id="GO:0051252">
    <property type="term" value="P:regulation of RNA metabolic process"/>
    <property type="evidence" value="ECO:0007669"/>
    <property type="project" value="InterPro"/>
</dbReference>
<dbReference type="CDD" id="cd16841">
    <property type="entry name" value="RraA_family"/>
    <property type="match status" value="1"/>
</dbReference>
<dbReference type="Gene3D" id="3.50.30.40">
    <property type="entry name" value="Ribonuclease E inhibitor RraA/RraA-like"/>
    <property type="match status" value="1"/>
</dbReference>
<dbReference type="HAMAP" id="MF_00471">
    <property type="entry name" value="RraA"/>
    <property type="match status" value="1"/>
</dbReference>
<dbReference type="InterPro" id="IPR010203">
    <property type="entry name" value="RraA"/>
</dbReference>
<dbReference type="InterPro" id="IPR005493">
    <property type="entry name" value="RraA/RraA-like"/>
</dbReference>
<dbReference type="InterPro" id="IPR036704">
    <property type="entry name" value="RraA/RraA-like_sf"/>
</dbReference>
<dbReference type="InterPro" id="IPR014339">
    <property type="entry name" value="RraA_gpbac"/>
</dbReference>
<dbReference type="NCBIfam" id="TIGR01935">
    <property type="entry name" value="NOT-MenG"/>
    <property type="match status" value="1"/>
</dbReference>
<dbReference type="NCBIfam" id="NF006875">
    <property type="entry name" value="PRK09372.1"/>
    <property type="match status" value="1"/>
</dbReference>
<dbReference type="NCBIfam" id="TIGR02998">
    <property type="entry name" value="RraA_entero"/>
    <property type="match status" value="1"/>
</dbReference>
<dbReference type="PANTHER" id="PTHR33254">
    <property type="entry name" value="4-HYDROXY-4-METHYL-2-OXOGLUTARATE ALDOLASE 3-RELATED"/>
    <property type="match status" value="1"/>
</dbReference>
<dbReference type="PANTHER" id="PTHR33254:SF29">
    <property type="entry name" value="REGULATOR OF RIBONUCLEASE ACTIVITY A"/>
    <property type="match status" value="1"/>
</dbReference>
<dbReference type="Pfam" id="PF03737">
    <property type="entry name" value="RraA-like"/>
    <property type="match status" value="1"/>
</dbReference>
<dbReference type="SUPFAM" id="SSF89562">
    <property type="entry name" value="RraA-like"/>
    <property type="match status" value="1"/>
</dbReference>
<accession>B4S2E4</accession>
<accession>F2G2Z6</accession>
<evidence type="ECO:0000255" key="1">
    <source>
        <dbReference type="HAMAP-Rule" id="MF_00471"/>
    </source>
</evidence>
<comment type="function">
    <text evidence="1">Globally modulates RNA abundance by binding to RNase E (Rne) and regulating its endonucleolytic activity. Can modulate Rne action in a substrate-dependent manner by altering the composition of the degradosome. Modulates RNA-binding and helicase activities of the degradosome.</text>
</comment>
<comment type="subunit">
    <text evidence="1">Homotrimer. Binds to both RNA-binding sites in the C-terminal region of Rne and to RhlB.</text>
</comment>
<comment type="subcellular location">
    <subcellularLocation>
        <location evidence="1">Cytoplasm</location>
    </subcellularLocation>
</comment>
<comment type="similarity">
    <text evidence="1">Belongs to the RraA family.</text>
</comment>
<gene>
    <name evidence="1" type="primary">rraA</name>
    <name type="ordered locus">MADE_1001035</name>
</gene>
<feature type="chain" id="PRO_1000125593" description="Regulator of ribonuclease activity A">
    <location>
        <begin position="1"/>
        <end position="161"/>
    </location>
</feature>